<evidence type="ECO:0000250" key="1"/>
<evidence type="ECO:0000255" key="2"/>
<evidence type="ECO:0000255" key="3">
    <source>
        <dbReference type="PROSITE-ProRule" id="PRU00159"/>
    </source>
</evidence>
<evidence type="ECO:0000255" key="4">
    <source>
        <dbReference type="PROSITE-ProRule" id="PRU10027"/>
    </source>
</evidence>
<evidence type="ECO:0000256" key="5">
    <source>
        <dbReference type="SAM" id="MobiDB-lite"/>
    </source>
</evidence>
<comment type="catalytic activity">
    <reaction>
        <text>L-seryl-[protein] + ATP = O-phospho-L-seryl-[protein] + ADP + H(+)</text>
        <dbReference type="Rhea" id="RHEA:17989"/>
        <dbReference type="Rhea" id="RHEA-COMP:9863"/>
        <dbReference type="Rhea" id="RHEA-COMP:11604"/>
        <dbReference type="ChEBI" id="CHEBI:15378"/>
        <dbReference type="ChEBI" id="CHEBI:29999"/>
        <dbReference type="ChEBI" id="CHEBI:30616"/>
        <dbReference type="ChEBI" id="CHEBI:83421"/>
        <dbReference type="ChEBI" id="CHEBI:456216"/>
        <dbReference type="EC" id="2.7.11.1"/>
    </reaction>
</comment>
<comment type="catalytic activity">
    <reaction>
        <text>L-threonyl-[protein] + ATP = O-phospho-L-threonyl-[protein] + ADP + H(+)</text>
        <dbReference type="Rhea" id="RHEA:46608"/>
        <dbReference type="Rhea" id="RHEA-COMP:11060"/>
        <dbReference type="Rhea" id="RHEA-COMP:11605"/>
        <dbReference type="ChEBI" id="CHEBI:15378"/>
        <dbReference type="ChEBI" id="CHEBI:30013"/>
        <dbReference type="ChEBI" id="CHEBI:30616"/>
        <dbReference type="ChEBI" id="CHEBI:61977"/>
        <dbReference type="ChEBI" id="CHEBI:456216"/>
        <dbReference type="EC" id="2.7.11.1"/>
    </reaction>
</comment>
<comment type="cofactor">
    <cofactor evidence="1">
        <name>Mg(2+)</name>
        <dbReference type="ChEBI" id="CHEBI:18420"/>
    </cofactor>
</comment>
<comment type="subcellular location">
    <subcellularLocation>
        <location evidence="1">Nucleus</location>
    </subcellularLocation>
</comment>
<comment type="similarity">
    <text evidence="3">Belongs to the protein kinase superfamily. Ser/Thr protein kinase family.</text>
</comment>
<name>TLK1B_DANRE</name>
<accession>Q90ZY6</accession>
<sequence length="756" mass="85454">MSVQSNSNSSGSLDGAPSCSQFSTGSPTPGSVSPLDIFAPRRHKEGMDELHSLDPRRQELLEARFIGAVSGNTGGSTGSASGGPKGLNNNECSSHSFGSLGSSSDKESETPEKKHFESSRGRKRKVDNQSESSQGKSSGRGPKISDYFDFQGGNGSSPVRGLPSVLRSPQNSHSAPGAIVRQNSSSPTSLCFMDHTMNLKQLSSRSVQTDLTLLKLAALESNKNLDLEKKEGRIDDLLRANCDLRRQIDEQQKLLERFKERLNKCTTMSKKLLIEKSTQEKQSCREKSMQDRLRLGHFTTVRHGASYSEQWTDGYAFQNLVKQQEWINQQREEIERQRKLLAKRKPSSTPSSQSPTPNESKQRKTKAVNGADNDPFLKPSLPTLLTVAEYHEQEEIFKLRLGHLKKEEAEIQAELERLERVRNLHIRELKRINNEDSSQFKDHPTLNERYLLLHLLGRGGFSEVYKAFDLFEQRYAAVKIHQLNKNWREEKKENYHKHACREYRIHKQLDHPRIVKLYDYFSLDTDTFCTVLEFCEGNDLDFYLKQHKLMSEKEARSIVMQIVNALRYLNEIKPSIIHYDLKPGNILLVDGTACGEIKITDFGLSKIMDDDSYGVDGMDLTSQGAGTYWYLPPECFVVGKEPPKISNKVDVWSVGVIFFQCLYGRKPFGHNQSQQDILQENTILKATEVQFPAKPVASNEAKAFIRRCLAYRKEDRSDVHQLGSDSYLLPHMRRSNSSGNLQATPASPAPSGIISY</sequence>
<feature type="chain" id="PRO_0000273529" description="Serine/threonine-protein kinase tousled-like 1-B">
    <location>
        <begin position="1"/>
        <end position="756"/>
    </location>
</feature>
<feature type="domain" description="Protein kinase" evidence="3">
    <location>
        <begin position="450"/>
        <end position="728"/>
    </location>
</feature>
<feature type="region of interest" description="Disordered" evidence="5">
    <location>
        <begin position="1"/>
        <end position="56"/>
    </location>
</feature>
<feature type="region of interest" description="Disordered" evidence="5">
    <location>
        <begin position="69"/>
        <end position="185"/>
    </location>
</feature>
<feature type="region of interest" description="Disordered" evidence="5">
    <location>
        <begin position="339"/>
        <end position="375"/>
    </location>
</feature>
<feature type="region of interest" description="Disordered" evidence="5">
    <location>
        <begin position="734"/>
        <end position="756"/>
    </location>
</feature>
<feature type="coiled-coil region" evidence="2">
    <location>
        <begin position="243"/>
        <end position="268"/>
    </location>
</feature>
<feature type="coiled-coil region" evidence="2">
    <location>
        <begin position="397"/>
        <end position="435"/>
    </location>
</feature>
<feature type="compositionally biased region" description="Low complexity" evidence="5">
    <location>
        <begin position="1"/>
        <end position="12"/>
    </location>
</feature>
<feature type="compositionally biased region" description="Low complexity" evidence="5">
    <location>
        <begin position="23"/>
        <end position="34"/>
    </location>
</feature>
<feature type="compositionally biased region" description="Basic and acidic residues" evidence="5">
    <location>
        <begin position="45"/>
        <end position="56"/>
    </location>
</feature>
<feature type="compositionally biased region" description="Gly residues" evidence="5">
    <location>
        <begin position="72"/>
        <end position="85"/>
    </location>
</feature>
<feature type="compositionally biased region" description="Low complexity" evidence="5">
    <location>
        <begin position="93"/>
        <end position="103"/>
    </location>
</feature>
<feature type="compositionally biased region" description="Basic and acidic residues" evidence="5">
    <location>
        <begin position="104"/>
        <end position="120"/>
    </location>
</feature>
<feature type="compositionally biased region" description="Low complexity" evidence="5">
    <location>
        <begin position="347"/>
        <end position="357"/>
    </location>
</feature>
<feature type="compositionally biased region" description="Polar residues" evidence="5">
    <location>
        <begin position="735"/>
        <end position="745"/>
    </location>
</feature>
<feature type="active site" description="Proton acceptor" evidence="3 4">
    <location>
        <position position="580"/>
    </location>
</feature>
<feature type="binding site" evidence="3">
    <location>
        <begin position="456"/>
        <end position="464"/>
    </location>
    <ligand>
        <name>ATP</name>
        <dbReference type="ChEBI" id="CHEBI:30616"/>
    </ligand>
</feature>
<feature type="binding site" evidence="3">
    <location>
        <position position="479"/>
    </location>
    <ligand>
        <name>ATP</name>
        <dbReference type="ChEBI" id="CHEBI:30616"/>
    </ligand>
</feature>
<reference key="1">
    <citation type="submission" date="2000-05" db="EMBL/GenBank/DDBJ databases">
        <title>The zebrafish homolog of the human pKU-beta protein kinase.</title>
        <authorList>
            <person name="Chou C.-M."/>
            <person name="Lee I.-L."/>
            <person name="Leu J.-H."/>
            <person name="Huang C.-J."/>
        </authorList>
    </citation>
    <scope>NUCLEOTIDE SEQUENCE [MRNA]</scope>
</reference>
<keyword id="KW-0067">ATP-binding</keyword>
<keyword id="KW-0175">Coiled coil</keyword>
<keyword id="KW-0418">Kinase</keyword>
<keyword id="KW-0547">Nucleotide-binding</keyword>
<keyword id="KW-0539">Nucleus</keyword>
<keyword id="KW-1185">Reference proteome</keyword>
<keyword id="KW-0723">Serine/threonine-protein kinase</keyword>
<keyword id="KW-0808">Transferase</keyword>
<protein>
    <recommendedName>
        <fullName>Serine/threonine-protein kinase tousled-like 1-B</fullName>
        <ecNumber>2.7.11.1</ecNumber>
    </recommendedName>
    <alternativeName>
        <fullName>PKU-beta</fullName>
    </alternativeName>
    <alternativeName>
        <fullName>Tousled-like kinase 1-B</fullName>
    </alternativeName>
</protein>
<dbReference type="EC" id="2.7.11.1"/>
<dbReference type="EMBL" id="AF265345">
    <property type="protein sequence ID" value="AAK52418.1"/>
    <property type="molecule type" value="mRNA"/>
</dbReference>
<dbReference type="SMR" id="Q90ZY6"/>
<dbReference type="FunCoup" id="Q90ZY6">
    <property type="interactions" value="1433"/>
</dbReference>
<dbReference type="STRING" id="7955.ENSDARP00000136032"/>
<dbReference type="PaxDb" id="7955-ENSDARP00000006738"/>
<dbReference type="AGR" id="ZFIN:ZDB-GENE-030131-4933"/>
<dbReference type="ZFIN" id="ZDB-GENE-030131-4933">
    <property type="gene designation" value="tlk1b"/>
</dbReference>
<dbReference type="eggNOG" id="KOG1151">
    <property type="taxonomic scope" value="Eukaryota"/>
</dbReference>
<dbReference type="InParanoid" id="Q90ZY6"/>
<dbReference type="PhylomeDB" id="Q90ZY6"/>
<dbReference type="PRO" id="PR:Q90ZY6"/>
<dbReference type="Proteomes" id="UP000000437">
    <property type="component" value="Unplaced"/>
</dbReference>
<dbReference type="GO" id="GO:0005634">
    <property type="term" value="C:nucleus"/>
    <property type="evidence" value="ECO:0000318"/>
    <property type="project" value="GO_Central"/>
</dbReference>
<dbReference type="GO" id="GO:0005524">
    <property type="term" value="F:ATP binding"/>
    <property type="evidence" value="ECO:0007669"/>
    <property type="project" value="UniProtKB-KW"/>
</dbReference>
<dbReference type="GO" id="GO:0106310">
    <property type="term" value="F:protein serine kinase activity"/>
    <property type="evidence" value="ECO:0007669"/>
    <property type="project" value="RHEA"/>
</dbReference>
<dbReference type="GO" id="GO:0004674">
    <property type="term" value="F:protein serine/threonine kinase activity"/>
    <property type="evidence" value="ECO:0000318"/>
    <property type="project" value="GO_Central"/>
</dbReference>
<dbReference type="GO" id="GO:0007059">
    <property type="term" value="P:chromosome segregation"/>
    <property type="evidence" value="ECO:0000318"/>
    <property type="project" value="GO_Central"/>
</dbReference>
<dbReference type="GO" id="GO:0035556">
    <property type="term" value="P:intracellular signal transduction"/>
    <property type="evidence" value="ECO:0000318"/>
    <property type="project" value="GO_Central"/>
</dbReference>
<dbReference type="FunFam" id="1.10.510.10:FF:000037">
    <property type="entry name" value="Serine/threonine-protein kinase tousled-like 2"/>
    <property type="match status" value="1"/>
</dbReference>
<dbReference type="Gene3D" id="1.10.510.10">
    <property type="entry name" value="Transferase(Phosphotransferase) domain 1"/>
    <property type="match status" value="1"/>
</dbReference>
<dbReference type="InterPro" id="IPR011009">
    <property type="entry name" value="Kinase-like_dom_sf"/>
</dbReference>
<dbReference type="InterPro" id="IPR000719">
    <property type="entry name" value="Prot_kinase_dom"/>
</dbReference>
<dbReference type="InterPro" id="IPR017441">
    <property type="entry name" value="Protein_kinase_ATP_BS"/>
</dbReference>
<dbReference type="InterPro" id="IPR008271">
    <property type="entry name" value="Ser/Thr_kinase_AS"/>
</dbReference>
<dbReference type="PANTHER" id="PTHR22974">
    <property type="entry name" value="MIXED LINEAGE PROTEIN KINASE"/>
    <property type="match status" value="1"/>
</dbReference>
<dbReference type="PANTHER" id="PTHR22974:SF32">
    <property type="entry name" value="SERINE_THREONINE-PROTEIN KINASE TOUSLED-LIKE 1-B"/>
    <property type="match status" value="1"/>
</dbReference>
<dbReference type="Pfam" id="PF00069">
    <property type="entry name" value="Pkinase"/>
    <property type="match status" value="1"/>
</dbReference>
<dbReference type="SMART" id="SM00220">
    <property type="entry name" value="S_TKc"/>
    <property type="match status" value="1"/>
</dbReference>
<dbReference type="SUPFAM" id="SSF56112">
    <property type="entry name" value="Protein kinase-like (PK-like)"/>
    <property type="match status" value="1"/>
</dbReference>
<dbReference type="PROSITE" id="PS00107">
    <property type="entry name" value="PROTEIN_KINASE_ATP"/>
    <property type="match status" value="1"/>
</dbReference>
<dbReference type="PROSITE" id="PS50011">
    <property type="entry name" value="PROTEIN_KINASE_DOM"/>
    <property type="match status" value="1"/>
</dbReference>
<dbReference type="PROSITE" id="PS00108">
    <property type="entry name" value="PROTEIN_KINASE_ST"/>
    <property type="match status" value="1"/>
</dbReference>
<proteinExistence type="evidence at transcript level"/>
<gene>
    <name type="primary">tlk1b</name>
    <name type="synonym">tlk1</name>
    <name type="ORF">wu:fe11e12</name>
</gene>
<organism>
    <name type="scientific">Danio rerio</name>
    <name type="common">Zebrafish</name>
    <name type="synonym">Brachydanio rerio</name>
    <dbReference type="NCBI Taxonomy" id="7955"/>
    <lineage>
        <taxon>Eukaryota</taxon>
        <taxon>Metazoa</taxon>
        <taxon>Chordata</taxon>
        <taxon>Craniata</taxon>
        <taxon>Vertebrata</taxon>
        <taxon>Euteleostomi</taxon>
        <taxon>Actinopterygii</taxon>
        <taxon>Neopterygii</taxon>
        <taxon>Teleostei</taxon>
        <taxon>Ostariophysi</taxon>
        <taxon>Cypriniformes</taxon>
        <taxon>Danionidae</taxon>
        <taxon>Danioninae</taxon>
        <taxon>Danio</taxon>
    </lineage>
</organism>